<proteinExistence type="inferred from homology"/>
<feature type="chain" id="PRO_0000293130" description="Uncharacterized protein TK0644">
    <location>
        <begin position="1"/>
        <end position="108"/>
    </location>
</feature>
<name>Y644_THEKO</name>
<evidence type="ECO:0000305" key="1"/>
<dbReference type="EMBL" id="AP006878">
    <property type="protein sequence ID" value="BAD84833.1"/>
    <property type="molecule type" value="Genomic_DNA"/>
</dbReference>
<dbReference type="RefSeq" id="WP_011249595.1">
    <property type="nucleotide sequence ID" value="NC_006624.1"/>
</dbReference>
<dbReference type="SMR" id="Q5JF83"/>
<dbReference type="STRING" id="69014.TK0644"/>
<dbReference type="EnsemblBacteria" id="BAD84833">
    <property type="protein sequence ID" value="BAD84833"/>
    <property type="gene ID" value="TK0644"/>
</dbReference>
<dbReference type="GeneID" id="78447158"/>
<dbReference type="KEGG" id="tko:TK0644"/>
<dbReference type="PATRIC" id="fig|69014.16.peg.625"/>
<dbReference type="eggNOG" id="arCOG05854">
    <property type="taxonomic scope" value="Archaea"/>
</dbReference>
<dbReference type="HOGENOM" id="CLU_2271176_0_0_2"/>
<dbReference type="InParanoid" id="Q5JF83"/>
<dbReference type="OrthoDB" id="85298at2157"/>
<dbReference type="PhylomeDB" id="Q5JF83"/>
<dbReference type="Proteomes" id="UP000000536">
    <property type="component" value="Chromosome"/>
</dbReference>
<dbReference type="Gene3D" id="3.30.300.100">
    <property type="entry name" value="MTH677-like"/>
    <property type="match status" value="1"/>
</dbReference>
<dbReference type="InterPro" id="IPR024502">
    <property type="entry name" value="DUF3194"/>
</dbReference>
<dbReference type="InterPro" id="IPR035954">
    <property type="entry name" value="MTH677-like_sf"/>
</dbReference>
<dbReference type="Pfam" id="PF11419">
    <property type="entry name" value="DUF3194"/>
    <property type="match status" value="1"/>
</dbReference>
<comment type="similarity">
    <text evidence="1">Belongs to the UPF0440 family.</text>
</comment>
<organism>
    <name type="scientific">Thermococcus kodakarensis (strain ATCC BAA-918 / JCM 12380 / KOD1)</name>
    <name type="common">Pyrococcus kodakaraensis (strain KOD1)</name>
    <dbReference type="NCBI Taxonomy" id="69014"/>
    <lineage>
        <taxon>Archaea</taxon>
        <taxon>Methanobacteriati</taxon>
        <taxon>Methanobacteriota</taxon>
        <taxon>Thermococci</taxon>
        <taxon>Thermococcales</taxon>
        <taxon>Thermococcaceae</taxon>
        <taxon>Thermococcus</taxon>
    </lineage>
</organism>
<reference key="1">
    <citation type="journal article" date="2005" name="Genome Res.">
        <title>Complete genome sequence of the hyperthermophilic archaeon Thermococcus kodakaraensis KOD1 and comparison with Pyrococcus genomes.</title>
        <authorList>
            <person name="Fukui T."/>
            <person name="Atomi H."/>
            <person name="Kanai T."/>
            <person name="Matsumi R."/>
            <person name="Fujiwara S."/>
            <person name="Imanaka T."/>
        </authorList>
    </citation>
    <scope>NUCLEOTIDE SEQUENCE [LARGE SCALE GENOMIC DNA]</scope>
    <source>
        <strain>ATCC BAA-918 / JCM 12380 / KOD1</strain>
    </source>
</reference>
<accession>Q5JF83</accession>
<keyword id="KW-1185">Reference proteome</keyword>
<gene>
    <name type="ordered locus">TK0644</name>
</gene>
<sequence length="108" mass="12297">MESEGRRVVHIGLPELTEEQIIEVGELAQRVVIKHVFDALNRSDVKDIEVTTRINRGETLDLELEVYLEVPVFVKVDVERLIDEAVEKAYAAVEKKLREIANEGQDKA</sequence>
<protein>
    <recommendedName>
        <fullName>Uncharacterized protein TK0644</fullName>
    </recommendedName>
</protein>